<keyword id="KW-0597">Phosphoprotein</keyword>
<keyword id="KW-1185">Reference proteome</keyword>
<sequence length="325" mass="36692">MKSTKTQPSPEREREPSFFQKLFGNLCSCFQDASIDEKPTYTPAKPVKKAPSVVQPRRVSRTLRSSESVHTNHGPERVFESPTPARTSISLESAISPNGTTNEQDIAQQGDMIDSHVHFGEQPTEPIDFADPPLPEVKRYGEGNWLLPPIAKEDEGKKCLILDLDETLVHSSFKYIEPADFVVSIEIDGLQHDVRVVKRPGVDEFLKKMGDMFEIVVFTASLAKYADPVLDMLDHSHVIRHRLFREACCNYEGNFVKDLSQLGRNLEDSIIIDNSPSSYIFHPSHAVPISSWFNDMHDMELIDLIPFLEHLARVPDVSTVLNLQL</sequence>
<organism>
    <name type="scientific">Schizosaccharomyces pombe (strain 972 / ATCC 24843)</name>
    <name type="common">Fission yeast</name>
    <dbReference type="NCBI Taxonomy" id="284812"/>
    <lineage>
        <taxon>Eukaryota</taxon>
        <taxon>Fungi</taxon>
        <taxon>Dikarya</taxon>
        <taxon>Ascomycota</taxon>
        <taxon>Taphrinomycotina</taxon>
        <taxon>Schizosaccharomycetes</taxon>
        <taxon>Schizosaccharomycetales</taxon>
        <taxon>Schizosaccharomycetaceae</taxon>
        <taxon>Schizosaccharomyces</taxon>
    </lineage>
</organism>
<proteinExistence type="evidence at protein level"/>
<feature type="chain" id="PRO_0000212578" description="Uncharacterized protein C2F7.02c">
    <location>
        <begin position="1"/>
        <end position="325"/>
    </location>
</feature>
<feature type="domain" description="FCP1 homology" evidence="1">
    <location>
        <begin position="153"/>
        <end position="311"/>
    </location>
</feature>
<feature type="region of interest" description="Disordered" evidence="2">
    <location>
        <begin position="37"/>
        <end position="85"/>
    </location>
</feature>
<feature type="compositionally biased region" description="Polar residues" evidence="2">
    <location>
        <begin position="62"/>
        <end position="71"/>
    </location>
</feature>
<feature type="modified residue" description="Phosphoserine" evidence="3">
    <location>
        <position position="52"/>
    </location>
</feature>
<gene>
    <name type="ORF">SPAC2F7.02c</name>
</gene>
<protein>
    <recommendedName>
        <fullName>Uncharacterized protein C2F7.02c</fullName>
    </recommendedName>
</protein>
<dbReference type="EMBL" id="CU329670">
    <property type="protein sequence ID" value="CAA90489.1"/>
    <property type="molecule type" value="Genomic_DNA"/>
</dbReference>
<dbReference type="PIR" id="T38550">
    <property type="entry name" value="S58146"/>
</dbReference>
<dbReference type="SMR" id="Q09695"/>
<dbReference type="BioGRID" id="278391">
    <property type="interactions" value="5"/>
</dbReference>
<dbReference type="FunCoup" id="Q09695">
    <property type="interactions" value="159"/>
</dbReference>
<dbReference type="IntAct" id="Q09695">
    <property type="interactions" value="1"/>
</dbReference>
<dbReference type="STRING" id="284812.Q09695"/>
<dbReference type="iPTMnet" id="Q09695"/>
<dbReference type="PaxDb" id="4896-SPAC2F7.02c.1"/>
<dbReference type="EnsemblFungi" id="SPAC2F7.02c.1">
    <property type="protein sequence ID" value="SPAC2F7.02c.1:pep"/>
    <property type="gene ID" value="SPAC2F7.02c"/>
</dbReference>
<dbReference type="KEGG" id="spo:2541901"/>
<dbReference type="PomBase" id="SPAC2F7.02c"/>
<dbReference type="VEuPathDB" id="FungiDB:SPAC2F7.02c"/>
<dbReference type="eggNOG" id="KOG1605">
    <property type="taxonomic scope" value="Eukaryota"/>
</dbReference>
<dbReference type="HOGENOM" id="CLU_020262_9_0_1"/>
<dbReference type="InParanoid" id="Q09695"/>
<dbReference type="OMA" id="NDMHDME"/>
<dbReference type="PhylomeDB" id="Q09695"/>
<dbReference type="PRO" id="PR:Q09695"/>
<dbReference type="Proteomes" id="UP000002485">
    <property type="component" value="Chromosome I"/>
</dbReference>
<dbReference type="GO" id="GO:0005886">
    <property type="term" value="C:plasma membrane"/>
    <property type="evidence" value="ECO:0000318"/>
    <property type="project" value="GO_Central"/>
</dbReference>
<dbReference type="GO" id="GO:0004721">
    <property type="term" value="F:phosphoprotein phosphatase activity"/>
    <property type="evidence" value="ECO:0000318"/>
    <property type="project" value="GO_Central"/>
</dbReference>
<dbReference type="GO" id="GO:0180007">
    <property type="term" value="F:RNA polymerase II CTD heptapeptide repeat S5 phosphatase activity"/>
    <property type="evidence" value="ECO:0000250"/>
    <property type="project" value="PomBase"/>
</dbReference>
<dbReference type="GO" id="GO:0006357">
    <property type="term" value="P:regulation of transcription by RNA polymerase II"/>
    <property type="evidence" value="ECO:0000250"/>
    <property type="project" value="PomBase"/>
</dbReference>
<dbReference type="GO" id="GO:0023052">
    <property type="term" value="P:signaling"/>
    <property type="evidence" value="ECO:0000303"/>
    <property type="project" value="PomBase"/>
</dbReference>
<dbReference type="CDD" id="cd07521">
    <property type="entry name" value="HAD_FCP1-like"/>
    <property type="match status" value="1"/>
</dbReference>
<dbReference type="FunFam" id="3.40.50.1000:FF:000043">
    <property type="entry name" value="General stress response phosphoprotein phosphatase Psr1/2"/>
    <property type="match status" value="1"/>
</dbReference>
<dbReference type="Gene3D" id="3.40.50.1000">
    <property type="entry name" value="HAD superfamily/HAD-like"/>
    <property type="match status" value="1"/>
</dbReference>
<dbReference type="InterPro" id="IPR011948">
    <property type="entry name" value="Dullard_phosphatase"/>
</dbReference>
<dbReference type="InterPro" id="IPR004274">
    <property type="entry name" value="FCP1_dom"/>
</dbReference>
<dbReference type="InterPro" id="IPR036412">
    <property type="entry name" value="HAD-like_sf"/>
</dbReference>
<dbReference type="InterPro" id="IPR023214">
    <property type="entry name" value="HAD_sf"/>
</dbReference>
<dbReference type="InterPro" id="IPR050365">
    <property type="entry name" value="TIM50"/>
</dbReference>
<dbReference type="NCBIfam" id="TIGR02251">
    <property type="entry name" value="HIF-SF_euk"/>
    <property type="match status" value="1"/>
</dbReference>
<dbReference type="PANTHER" id="PTHR12210">
    <property type="entry name" value="DULLARD PROTEIN PHOSPHATASE"/>
    <property type="match status" value="1"/>
</dbReference>
<dbReference type="Pfam" id="PF03031">
    <property type="entry name" value="NIF"/>
    <property type="match status" value="1"/>
</dbReference>
<dbReference type="SMART" id="SM00577">
    <property type="entry name" value="CPDc"/>
    <property type="match status" value="1"/>
</dbReference>
<dbReference type="SUPFAM" id="SSF56784">
    <property type="entry name" value="HAD-like"/>
    <property type="match status" value="1"/>
</dbReference>
<dbReference type="PROSITE" id="PS50969">
    <property type="entry name" value="FCP1"/>
    <property type="match status" value="1"/>
</dbReference>
<reference key="1">
    <citation type="journal article" date="2002" name="Nature">
        <title>The genome sequence of Schizosaccharomyces pombe.</title>
        <authorList>
            <person name="Wood V."/>
            <person name="Gwilliam R."/>
            <person name="Rajandream M.A."/>
            <person name="Lyne M.H."/>
            <person name="Lyne R."/>
            <person name="Stewart A."/>
            <person name="Sgouros J.G."/>
            <person name="Peat N."/>
            <person name="Hayles J."/>
            <person name="Baker S.G."/>
            <person name="Basham D."/>
            <person name="Bowman S."/>
            <person name="Brooks K."/>
            <person name="Brown D."/>
            <person name="Brown S."/>
            <person name="Chillingworth T."/>
            <person name="Churcher C.M."/>
            <person name="Collins M."/>
            <person name="Connor R."/>
            <person name="Cronin A."/>
            <person name="Davis P."/>
            <person name="Feltwell T."/>
            <person name="Fraser A."/>
            <person name="Gentles S."/>
            <person name="Goble A."/>
            <person name="Hamlin N."/>
            <person name="Harris D.E."/>
            <person name="Hidalgo J."/>
            <person name="Hodgson G."/>
            <person name="Holroyd S."/>
            <person name="Hornsby T."/>
            <person name="Howarth S."/>
            <person name="Huckle E.J."/>
            <person name="Hunt S."/>
            <person name="Jagels K."/>
            <person name="James K.D."/>
            <person name="Jones L."/>
            <person name="Jones M."/>
            <person name="Leather S."/>
            <person name="McDonald S."/>
            <person name="McLean J."/>
            <person name="Mooney P."/>
            <person name="Moule S."/>
            <person name="Mungall K.L."/>
            <person name="Murphy L.D."/>
            <person name="Niblett D."/>
            <person name="Odell C."/>
            <person name="Oliver K."/>
            <person name="O'Neil S."/>
            <person name="Pearson D."/>
            <person name="Quail M.A."/>
            <person name="Rabbinowitsch E."/>
            <person name="Rutherford K.M."/>
            <person name="Rutter S."/>
            <person name="Saunders D."/>
            <person name="Seeger K."/>
            <person name="Sharp S."/>
            <person name="Skelton J."/>
            <person name="Simmonds M.N."/>
            <person name="Squares R."/>
            <person name="Squares S."/>
            <person name="Stevens K."/>
            <person name="Taylor K."/>
            <person name="Taylor R.G."/>
            <person name="Tivey A."/>
            <person name="Walsh S.V."/>
            <person name="Warren T."/>
            <person name="Whitehead S."/>
            <person name="Woodward J.R."/>
            <person name="Volckaert G."/>
            <person name="Aert R."/>
            <person name="Robben J."/>
            <person name="Grymonprez B."/>
            <person name="Weltjens I."/>
            <person name="Vanstreels E."/>
            <person name="Rieger M."/>
            <person name="Schaefer M."/>
            <person name="Mueller-Auer S."/>
            <person name="Gabel C."/>
            <person name="Fuchs M."/>
            <person name="Duesterhoeft A."/>
            <person name="Fritzc C."/>
            <person name="Holzer E."/>
            <person name="Moestl D."/>
            <person name="Hilbert H."/>
            <person name="Borzym K."/>
            <person name="Langer I."/>
            <person name="Beck A."/>
            <person name="Lehrach H."/>
            <person name="Reinhardt R."/>
            <person name="Pohl T.M."/>
            <person name="Eger P."/>
            <person name="Zimmermann W."/>
            <person name="Wedler H."/>
            <person name="Wambutt R."/>
            <person name="Purnelle B."/>
            <person name="Goffeau A."/>
            <person name="Cadieu E."/>
            <person name="Dreano S."/>
            <person name="Gloux S."/>
            <person name="Lelaure V."/>
            <person name="Mottier S."/>
            <person name="Galibert F."/>
            <person name="Aves S.J."/>
            <person name="Xiang Z."/>
            <person name="Hunt C."/>
            <person name="Moore K."/>
            <person name="Hurst S.M."/>
            <person name="Lucas M."/>
            <person name="Rochet M."/>
            <person name="Gaillardin C."/>
            <person name="Tallada V.A."/>
            <person name="Garzon A."/>
            <person name="Thode G."/>
            <person name="Daga R.R."/>
            <person name="Cruzado L."/>
            <person name="Jimenez J."/>
            <person name="Sanchez M."/>
            <person name="del Rey F."/>
            <person name="Benito J."/>
            <person name="Dominguez A."/>
            <person name="Revuelta J.L."/>
            <person name="Moreno S."/>
            <person name="Armstrong J."/>
            <person name="Forsburg S.L."/>
            <person name="Cerutti L."/>
            <person name="Lowe T."/>
            <person name="McCombie W.R."/>
            <person name="Paulsen I."/>
            <person name="Potashkin J."/>
            <person name="Shpakovski G.V."/>
            <person name="Ussery D."/>
            <person name="Barrell B.G."/>
            <person name="Nurse P."/>
        </authorList>
    </citation>
    <scope>NUCLEOTIDE SEQUENCE [LARGE SCALE GENOMIC DNA]</scope>
    <source>
        <strain>972 / ATCC 24843</strain>
    </source>
</reference>
<reference key="2">
    <citation type="journal article" date="2008" name="J. Proteome Res.">
        <title>Phosphoproteome analysis of fission yeast.</title>
        <authorList>
            <person name="Wilson-Grady J.T."/>
            <person name="Villen J."/>
            <person name="Gygi S.P."/>
        </authorList>
    </citation>
    <scope>PHOSPHORYLATION [LARGE SCALE ANALYSIS] AT SER-52</scope>
    <scope>IDENTIFICATION BY MASS SPECTROMETRY</scope>
</reference>
<evidence type="ECO:0000255" key="1">
    <source>
        <dbReference type="PROSITE-ProRule" id="PRU00336"/>
    </source>
</evidence>
<evidence type="ECO:0000256" key="2">
    <source>
        <dbReference type="SAM" id="MobiDB-lite"/>
    </source>
</evidence>
<evidence type="ECO:0000269" key="3">
    <source>
    </source>
</evidence>
<accession>Q09695</accession>
<name>YA22_SCHPO</name>